<protein>
    <recommendedName>
        <fullName>Nck-associated protein 1</fullName>
        <shortName>NAP 1</shortName>
    </recommendedName>
</protein>
<sequence length="1128" mass="128741">MSRGAMQPSQQKLAEKLTILNDRGIGMLTRIYNIKKACGDPKAKPSYLIDKNLESAVKFIVRKFPAVETRNNNQQLAQLQKEKSEILKNLALYYFTFVDVMEFKDHVCELLNTIDACQVFFDITVNFDLTKNYLDLVVTYTTLMLLLSRIEERKAIIGLYNYAHEMTHGSSDREYPRLGQMIVDYENPLKKMMEEFVPHGKSLSDALVSLQMVYPRRNLSADQWRNAQLLSLISAPSTMLNPAQSDTMPCEYLSLDTMEKWIVFGFILCHAALNSDPAALSLWKLALQSSTCLCLFRDEVFHIHKAAEDLFVNIRGYNKRVNDIRECKESALSHAGSMHRERRKFLRSALKELATVLADQPGLLGPKALFVFMALSFARDEIIWLLRHADNIQKKSTDDFIDKHIAELIFYMEELRAHVRKYGPVMQRYYVQYLSGFDAVVLNELVQNLSVCPEDESIIMSSFVNTMTSLSVKQVEDGEVFDFRGMRLDWFRLQAYTSVSKASLGLADHRELGKMMNTIIFHTKMVDSLVEMLVETSDLSIFCFYSRAFEKMFQQCLELPSQSRYSISFPLLCTHFMSCTHELCPEERHHIGDRSLSLCNMFLDEMAKQARNLITDICTEQCTLSDQLLPKHCAKTISQAVNKKSKKQTGKKGEPEREKPGVESMRKNRLLVTNLDKLHTALSELCFSINYVPNMMVWEHTFTPREYLTSHLEIRFTKSIVGMTMYNQTTQEIAKPSELLTSVRAYMTVLQSIENYVQIDITRVFNNVLLQQTQHLDSHGEPTITSLYTNWYLETLLRQVSNGHIAYFPAMKAFVNLPTENELTFNAEEYSDISEMRSLSELLGPYGMKFLSESLMWHISSQVAELKKLVVDNVEVLTQMRTSFDKPDHMAALFKRLTSVDSVLKRMTIIGVILSFRSLAQEALRDVLSCHIPFLVSSVEDFKDHIPRETDMKVAMNVYELSSAAGLPCEIDPALVVALSSQKSENISPEEEYKIACLLMVFVAVSMPTLASNVMSQYSPAIEGHCNNIHCLAKAINQIAAALFTIHKGSIEDRLKEFLALASSSLLKIGQETDKTTTRNRESVYLLLDMIVQESPFLTMDLLESCFPYVLLRNAYHAVYKQSVSSSA</sequence>
<evidence type="ECO:0000250" key="1"/>
<evidence type="ECO:0000250" key="2">
    <source>
        <dbReference type="UniProtKB" id="Q640K3"/>
    </source>
</evidence>
<evidence type="ECO:0000255" key="3"/>
<evidence type="ECO:0000256" key="4">
    <source>
        <dbReference type="SAM" id="MobiDB-lite"/>
    </source>
</evidence>
<evidence type="ECO:0000305" key="5"/>
<name>NCKP1_DANRE</name>
<keyword id="KW-0025">Alternative splicing</keyword>
<keyword id="KW-1003">Cell membrane</keyword>
<keyword id="KW-0966">Cell projection</keyword>
<keyword id="KW-0472">Membrane</keyword>
<keyword id="KW-1185">Reference proteome</keyword>
<keyword id="KW-0812">Transmembrane</keyword>
<keyword id="KW-1133">Transmembrane helix</keyword>
<dbReference type="EMBL" id="CR513785">
    <property type="protein sequence ID" value="CAQ13346.1"/>
    <property type="status" value="ALT_SEQ"/>
    <property type="molecule type" value="Genomic_DNA"/>
</dbReference>
<dbReference type="EMBL" id="BX548025">
    <property type="protein sequence ID" value="CAQ13346.1"/>
    <property type="status" value="JOINED"/>
    <property type="molecule type" value="Genomic_DNA"/>
</dbReference>
<dbReference type="EMBL" id="CR513785">
    <property type="protein sequence ID" value="CAQ13347.1"/>
    <property type="molecule type" value="Genomic_DNA"/>
</dbReference>
<dbReference type="EMBL" id="BX548025">
    <property type="protein sequence ID" value="CAQ13347.1"/>
    <property type="status" value="JOINED"/>
    <property type="molecule type" value="Genomic_DNA"/>
</dbReference>
<dbReference type="EMBL" id="BX548025">
    <property type="protein sequence ID" value="CAQ14913.1"/>
    <property type="status" value="ALT_SEQ"/>
    <property type="molecule type" value="Genomic_DNA"/>
</dbReference>
<dbReference type="EMBL" id="CR513785">
    <property type="protein sequence ID" value="CAQ14913.1"/>
    <property type="status" value="JOINED"/>
    <property type="molecule type" value="Genomic_DNA"/>
</dbReference>
<dbReference type="EMBL" id="BX548025">
    <property type="protein sequence ID" value="CAQ14914.1"/>
    <property type="molecule type" value="Genomic_DNA"/>
</dbReference>
<dbReference type="EMBL" id="CR513785">
    <property type="protein sequence ID" value="CAQ14914.1"/>
    <property type="status" value="JOINED"/>
    <property type="molecule type" value="Genomic_DNA"/>
</dbReference>
<dbReference type="RefSeq" id="XP_005167980.1">
    <molecule id="B0S6R1-1"/>
    <property type="nucleotide sequence ID" value="XM_005167923.5"/>
</dbReference>
<dbReference type="RefSeq" id="XP_005167981.1">
    <molecule id="B0S6R1-2"/>
    <property type="nucleotide sequence ID" value="XM_005167924.5"/>
</dbReference>
<dbReference type="SMR" id="B0S6R1"/>
<dbReference type="FunCoup" id="B0S6R1">
    <property type="interactions" value="2497"/>
</dbReference>
<dbReference type="STRING" id="7955.ENSDARP00000156716"/>
<dbReference type="PaxDb" id="7955-ENSDARP00000116328"/>
<dbReference type="PeptideAtlas" id="B0S6R1"/>
<dbReference type="Ensembl" id="ENSDART00000132696">
    <molecule id="B0S6R1-1"/>
    <property type="protein sequence ID" value="ENSDARP00000116328"/>
    <property type="gene ID" value="ENSDARG00000060853"/>
</dbReference>
<dbReference type="GeneID" id="561894"/>
<dbReference type="AGR" id="ZFIN:ZDB-GENE-030131-4426"/>
<dbReference type="CTD" id="10787"/>
<dbReference type="ZFIN" id="ZDB-GENE-030131-4426">
    <property type="gene designation" value="nckap1"/>
</dbReference>
<dbReference type="eggNOG" id="KOG1917">
    <property type="taxonomic scope" value="Eukaryota"/>
</dbReference>
<dbReference type="InParanoid" id="B0S6R1"/>
<dbReference type="OrthoDB" id="548214at2759"/>
<dbReference type="PhylomeDB" id="B0S6R1"/>
<dbReference type="TreeFam" id="TF313683"/>
<dbReference type="Reactome" id="R-DRE-9013404">
    <property type="pathway name" value="RAC2 GTPase cycle"/>
</dbReference>
<dbReference type="PRO" id="PR:B0S6R1"/>
<dbReference type="Proteomes" id="UP000000437">
    <property type="component" value="Chromosome 9"/>
</dbReference>
<dbReference type="Bgee" id="ENSDARG00000060853">
    <property type="expression patterns" value="Expressed in early embryo and 27 other cell types or tissues"/>
</dbReference>
<dbReference type="ExpressionAtlas" id="B0S6R1">
    <property type="expression patterns" value="baseline and differential"/>
</dbReference>
<dbReference type="GO" id="GO:0031258">
    <property type="term" value="C:lamellipodium membrane"/>
    <property type="evidence" value="ECO:0007669"/>
    <property type="project" value="UniProtKB-SubCell"/>
</dbReference>
<dbReference type="GO" id="GO:0031209">
    <property type="term" value="C:SCAR complex"/>
    <property type="evidence" value="ECO:0000318"/>
    <property type="project" value="GO_Central"/>
</dbReference>
<dbReference type="GO" id="GO:0016477">
    <property type="term" value="P:cell migration"/>
    <property type="evidence" value="ECO:0000318"/>
    <property type="project" value="GO_Central"/>
</dbReference>
<dbReference type="GO" id="GO:0000902">
    <property type="term" value="P:cell morphogenesis"/>
    <property type="evidence" value="ECO:0000318"/>
    <property type="project" value="GO_Central"/>
</dbReference>
<dbReference type="GO" id="GO:0030031">
    <property type="term" value="P:cell projection assembly"/>
    <property type="evidence" value="ECO:0000318"/>
    <property type="project" value="GO_Central"/>
</dbReference>
<dbReference type="GO" id="GO:0030866">
    <property type="term" value="P:cortical actin cytoskeleton organization"/>
    <property type="evidence" value="ECO:0000318"/>
    <property type="project" value="GO_Central"/>
</dbReference>
<dbReference type="GO" id="GO:0048812">
    <property type="term" value="P:neuron projection morphogenesis"/>
    <property type="evidence" value="ECO:0000315"/>
    <property type="project" value="ZFIN"/>
</dbReference>
<dbReference type="InterPro" id="IPR019137">
    <property type="entry name" value="Nck-associated_protein-1"/>
</dbReference>
<dbReference type="PANTHER" id="PTHR12093">
    <property type="entry name" value="NCK-ASSOCIATED PROTEIN 1"/>
    <property type="match status" value="1"/>
</dbReference>
<dbReference type="PANTHER" id="PTHR12093:SF11">
    <property type="entry name" value="NCK-ASSOCIATED PROTEIN 1"/>
    <property type="match status" value="1"/>
</dbReference>
<dbReference type="Pfam" id="PF09735">
    <property type="entry name" value="Nckap1"/>
    <property type="match status" value="1"/>
</dbReference>
<accession>B0S6R1</accession>
<accession>B0S6R0</accession>
<comment type="function">
    <text evidence="1 2">Part of the WAVE complex that regulates lamellipodia formation. The WAVE complex regulates actin filament reorganization via its interaction with the Arp2/3 complex. Actin remodeling activity is regulated by RAC1 (By similarity). Plays a role in neural tube closure.</text>
</comment>
<comment type="subcellular location">
    <subcellularLocation>
        <location evidence="1">Cell membrane</location>
        <topology evidence="1">Single-pass membrane protein</topology>
        <orientation evidence="1">Cytoplasmic side</orientation>
    </subcellularLocation>
    <subcellularLocation>
        <location evidence="1">Cell projection</location>
        <location evidence="1">Lamellipodium membrane</location>
        <topology evidence="1">Single-pass membrane protein</topology>
        <orientation evidence="1">Cytoplasmic side</orientation>
    </subcellularLocation>
    <text evidence="1">At the interface between the lamellipodial actin meshwork and the membrane.</text>
</comment>
<comment type="alternative products">
    <event type="alternative splicing"/>
    <isoform>
        <id>B0S6R1-1</id>
        <name>1</name>
        <sequence type="displayed"/>
    </isoform>
    <isoform>
        <id>B0S6R1-2</id>
        <name>2</name>
        <sequence type="described" ref="VSP_038573"/>
    </isoform>
</comment>
<comment type="similarity">
    <text evidence="5">Belongs to the HEM-1/HEM-2 family.</text>
</comment>
<comment type="sequence caution" evidence="5">
    <conflict type="erroneous gene model prediction">
        <sequence resource="EMBL-CDS" id="CAQ13346"/>
    </conflict>
</comment>
<comment type="sequence caution" evidence="5">
    <conflict type="erroneous gene model prediction">
        <sequence resource="EMBL-CDS" id="CAQ14913"/>
    </conflict>
</comment>
<reference key="1">
    <citation type="journal article" date="2013" name="Nature">
        <title>The zebrafish reference genome sequence and its relationship to the human genome.</title>
        <authorList>
            <person name="Howe K."/>
            <person name="Clark M.D."/>
            <person name="Torroja C.F."/>
            <person name="Torrance J."/>
            <person name="Berthelot C."/>
            <person name="Muffato M."/>
            <person name="Collins J.E."/>
            <person name="Humphray S."/>
            <person name="McLaren K."/>
            <person name="Matthews L."/>
            <person name="McLaren S."/>
            <person name="Sealy I."/>
            <person name="Caccamo M."/>
            <person name="Churcher C."/>
            <person name="Scott C."/>
            <person name="Barrett J.C."/>
            <person name="Koch R."/>
            <person name="Rauch G.J."/>
            <person name="White S."/>
            <person name="Chow W."/>
            <person name="Kilian B."/>
            <person name="Quintais L.T."/>
            <person name="Guerra-Assuncao J.A."/>
            <person name="Zhou Y."/>
            <person name="Gu Y."/>
            <person name="Yen J."/>
            <person name="Vogel J.H."/>
            <person name="Eyre T."/>
            <person name="Redmond S."/>
            <person name="Banerjee R."/>
            <person name="Chi J."/>
            <person name="Fu B."/>
            <person name="Langley E."/>
            <person name="Maguire S.F."/>
            <person name="Laird G.K."/>
            <person name="Lloyd D."/>
            <person name="Kenyon E."/>
            <person name="Donaldson S."/>
            <person name="Sehra H."/>
            <person name="Almeida-King J."/>
            <person name="Loveland J."/>
            <person name="Trevanion S."/>
            <person name="Jones M."/>
            <person name="Quail M."/>
            <person name="Willey D."/>
            <person name="Hunt A."/>
            <person name="Burton J."/>
            <person name="Sims S."/>
            <person name="McLay K."/>
            <person name="Plumb B."/>
            <person name="Davis J."/>
            <person name="Clee C."/>
            <person name="Oliver K."/>
            <person name="Clark R."/>
            <person name="Riddle C."/>
            <person name="Elliot D."/>
            <person name="Threadgold G."/>
            <person name="Harden G."/>
            <person name="Ware D."/>
            <person name="Begum S."/>
            <person name="Mortimore B."/>
            <person name="Kerry G."/>
            <person name="Heath P."/>
            <person name="Phillimore B."/>
            <person name="Tracey A."/>
            <person name="Corby N."/>
            <person name="Dunn M."/>
            <person name="Johnson C."/>
            <person name="Wood J."/>
            <person name="Clark S."/>
            <person name="Pelan S."/>
            <person name="Griffiths G."/>
            <person name="Smith M."/>
            <person name="Glithero R."/>
            <person name="Howden P."/>
            <person name="Barker N."/>
            <person name="Lloyd C."/>
            <person name="Stevens C."/>
            <person name="Harley J."/>
            <person name="Holt K."/>
            <person name="Panagiotidis G."/>
            <person name="Lovell J."/>
            <person name="Beasley H."/>
            <person name="Henderson C."/>
            <person name="Gordon D."/>
            <person name="Auger K."/>
            <person name="Wright D."/>
            <person name="Collins J."/>
            <person name="Raisen C."/>
            <person name="Dyer L."/>
            <person name="Leung K."/>
            <person name="Robertson L."/>
            <person name="Ambridge K."/>
            <person name="Leongamornlert D."/>
            <person name="McGuire S."/>
            <person name="Gilderthorp R."/>
            <person name="Griffiths C."/>
            <person name="Manthravadi D."/>
            <person name="Nichol S."/>
            <person name="Barker G."/>
            <person name="Whitehead S."/>
            <person name="Kay M."/>
            <person name="Brown J."/>
            <person name="Murnane C."/>
            <person name="Gray E."/>
            <person name="Humphries M."/>
            <person name="Sycamore N."/>
            <person name="Barker D."/>
            <person name="Saunders D."/>
            <person name="Wallis J."/>
            <person name="Babbage A."/>
            <person name="Hammond S."/>
            <person name="Mashreghi-Mohammadi M."/>
            <person name="Barr L."/>
            <person name="Martin S."/>
            <person name="Wray P."/>
            <person name="Ellington A."/>
            <person name="Matthews N."/>
            <person name="Ellwood M."/>
            <person name="Woodmansey R."/>
            <person name="Clark G."/>
            <person name="Cooper J."/>
            <person name="Tromans A."/>
            <person name="Grafham D."/>
            <person name="Skuce C."/>
            <person name="Pandian R."/>
            <person name="Andrews R."/>
            <person name="Harrison E."/>
            <person name="Kimberley A."/>
            <person name="Garnett J."/>
            <person name="Fosker N."/>
            <person name="Hall R."/>
            <person name="Garner P."/>
            <person name="Kelly D."/>
            <person name="Bird C."/>
            <person name="Palmer S."/>
            <person name="Gehring I."/>
            <person name="Berger A."/>
            <person name="Dooley C.M."/>
            <person name="Ersan-Urun Z."/>
            <person name="Eser C."/>
            <person name="Geiger H."/>
            <person name="Geisler M."/>
            <person name="Karotki L."/>
            <person name="Kirn A."/>
            <person name="Konantz J."/>
            <person name="Konantz M."/>
            <person name="Oberlander M."/>
            <person name="Rudolph-Geiger S."/>
            <person name="Teucke M."/>
            <person name="Lanz C."/>
            <person name="Raddatz G."/>
            <person name="Osoegawa K."/>
            <person name="Zhu B."/>
            <person name="Rapp A."/>
            <person name="Widaa S."/>
            <person name="Langford C."/>
            <person name="Yang F."/>
            <person name="Schuster S.C."/>
            <person name="Carter N.P."/>
            <person name="Harrow J."/>
            <person name="Ning Z."/>
            <person name="Herrero J."/>
            <person name="Searle S.M."/>
            <person name="Enright A."/>
            <person name="Geisler R."/>
            <person name="Plasterk R.H."/>
            <person name="Lee C."/>
            <person name="Westerfield M."/>
            <person name="de Jong P.J."/>
            <person name="Zon L.I."/>
            <person name="Postlethwait J.H."/>
            <person name="Nusslein-Volhard C."/>
            <person name="Hubbard T.J."/>
            <person name="Roest Crollius H."/>
            <person name="Rogers J."/>
            <person name="Stemple D.L."/>
        </authorList>
    </citation>
    <scope>NUCLEOTIDE SEQUENCE [LARGE SCALE GENOMIC DNA]</scope>
    <scope>ALTERNATIVE SPLICING (ISOFORMS 1 AND 2)</scope>
    <source>
        <strain>Tuebingen</strain>
    </source>
</reference>
<gene>
    <name type="primary">nckap1</name>
    <name type="ORF">si:dkey-234n3.1</name>
    <name type="ORF">wu:fd05c01</name>
</gene>
<proteinExistence type="inferred from homology"/>
<organism>
    <name type="scientific">Danio rerio</name>
    <name type="common">Zebrafish</name>
    <name type="synonym">Brachydanio rerio</name>
    <dbReference type="NCBI Taxonomy" id="7955"/>
    <lineage>
        <taxon>Eukaryota</taxon>
        <taxon>Metazoa</taxon>
        <taxon>Chordata</taxon>
        <taxon>Craniata</taxon>
        <taxon>Vertebrata</taxon>
        <taxon>Euteleostomi</taxon>
        <taxon>Actinopterygii</taxon>
        <taxon>Neopterygii</taxon>
        <taxon>Teleostei</taxon>
        <taxon>Ostariophysi</taxon>
        <taxon>Cypriniformes</taxon>
        <taxon>Danionidae</taxon>
        <taxon>Danioninae</taxon>
        <taxon>Danio</taxon>
    </lineage>
</organism>
<feature type="chain" id="PRO_0000364439" description="Nck-associated protein 1">
    <location>
        <begin position="1"/>
        <end position="1128"/>
    </location>
</feature>
<feature type="transmembrane region" description="Helical" evidence="3">
    <location>
        <begin position="995"/>
        <end position="1015"/>
    </location>
</feature>
<feature type="region of interest" description="Disordered" evidence="4">
    <location>
        <begin position="640"/>
        <end position="665"/>
    </location>
</feature>
<feature type="compositionally biased region" description="Basic and acidic residues" evidence="4">
    <location>
        <begin position="651"/>
        <end position="665"/>
    </location>
</feature>
<feature type="splice variant" id="VSP_038573" description="In isoform 2." evidence="5">
    <location>
        <begin position="74"/>
        <end position="75"/>
    </location>
</feature>